<sequence>XKEYND</sequence>
<feature type="chain" id="PRO_0000064704" description="Acid shock protein 2">
    <location>
        <begin position="1"/>
        <end position="6" status="greater than"/>
    </location>
</feature>
<feature type="non-terminal residue">
    <location>
        <position position="6"/>
    </location>
</feature>
<name>ASP2_FRUSA</name>
<accession>P82655</accession>
<reference key="1">
    <citation type="journal article" date="2001" name="Microbiology">
        <title>The acid-stress response in Lactobacillus sanfranciscensis CB1.</title>
        <authorList>
            <person name="De Angelis M."/>
            <person name="Bini L."/>
            <person name="Pallini V."/>
            <person name="Cocconcelli P.S."/>
            <person name="Gobbetti M."/>
        </authorList>
    </citation>
    <scope>PROTEIN SEQUENCE</scope>
    <source>
        <strain>CB1</strain>
    </source>
</reference>
<keyword id="KW-0903">Direct protein sequencing</keyword>
<proteinExistence type="evidence at protein level"/>
<comment type="induction">
    <text>Overexpressed in acid environments.</text>
</comment>
<protein>
    <recommendedName>
        <fullName>Acid shock protein 2</fullName>
    </recommendedName>
</protein>
<organism>
    <name type="scientific">Fructilactobacillus sanfranciscensis</name>
    <name type="common">Lactobacillus sanfranciscensis</name>
    <dbReference type="NCBI Taxonomy" id="1625"/>
    <lineage>
        <taxon>Bacteria</taxon>
        <taxon>Bacillati</taxon>
        <taxon>Bacillota</taxon>
        <taxon>Bacilli</taxon>
        <taxon>Lactobacillales</taxon>
        <taxon>Lactobacillaceae</taxon>
        <taxon>Fructilactobacillus</taxon>
    </lineage>
</organism>